<reference key="1">
    <citation type="journal article" date="2015" name="Genome Announc.">
        <title>Complete genome sequence of Anaeromyxobacter sp. Fw109-5, an anaerobic, metal-reducing bacterium isolated from a contaminated subsurface environment.</title>
        <authorList>
            <person name="Hwang C."/>
            <person name="Copeland A."/>
            <person name="Lucas S."/>
            <person name="Lapidus A."/>
            <person name="Barry K."/>
            <person name="Glavina Del Rio T."/>
            <person name="Dalin E."/>
            <person name="Tice H."/>
            <person name="Pitluck S."/>
            <person name="Sims D."/>
            <person name="Brettin T."/>
            <person name="Bruce D.C."/>
            <person name="Detter J.C."/>
            <person name="Han C.S."/>
            <person name="Schmutz J."/>
            <person name="Larimer F.W."/>
            <person name="Land M.L."/>
            <person name="Hauser L.J."/>
            <person name="Kyrpides N."/>
            <person name="Lykidis A."/>
            <person name="Richardson P."/>
            <person name="Belieav A."/>
            <person name="Sanford R.A."/>
            <person name="Loeffler F.E."/>
            <person name="Fields M.W."/>
        </authorList>
    </citation>
    <scope>NUCLEOTIDE SEQUENCE [LARGE SCALE GENOMIC DNA]</scope>
    <source>
        <strain>Fw109-5</strain>
    </source>
</reference>
<feature type="chain" id="PRO_1000001149" description="Ribosome maturation factor RimM">
    <location>
        <begin position="1"/>
        <end position="165"/>
    </location>
</feature>
<feature type="domain" description="PRC barrel" evidence="1">
    <location>
        <begin position="92"/>
        <end position="163"/>
    </location>
</feature>
<evidence type="ECO:0000255" key="1">
    <source>
        <dbReference type="HAMAP-Rule" id="MF_00014"/>
    </source>
</evidence>
<keyword id="KW-0143">Chaperone</keyword>
<keyword id="KW-0963">Cytoplasm</keyword>
<keyword id="KW-1185">Reference proteome</keyword>
<keyword id="KW-0690">Ribosome biogenesis</keyword>
<keyword id="KW-0698">rRNA processing</keyword>
<sequence length="165" mass="17456">MARIRLGKVVRAVGLKGHLGVAGSEGALATVRRIALRREGEPEPPLQEVLEARPQGRLWAVRIEGVSDRTSAEAWVGAEVLALREDLPEAGEARHYWADLEGLPVVTVAGAAIGTVTGLYETGGVDVLVVTTEEGGEKLVPLAPYVEVDVAGRRVVVDPPEGLLD</sequence>
<proteinExistence type="inferred from homology"/>
<organism>
    <name type="scientific">Anaeromyxobacter sp. (strain Fw109-5)</name>
    <dbReference type="NCBI Taxonomy" id="404589"/>
    <lineage>
        <taxon>Bacteria</taxon>
        <taxon>Pseudomonadati</taxon>
        <taxon>Myxococcota</taxon>
        <taxon>Myxococcia</taxon>
        <taxon>Myxococcales</taxon>
        <taxon>Cystobacterineae</taxon>
        <taxon>Anaeromyxobacteraceae</taxon>
        <taxon>Anaeromyxobacter</taxon>
    </lineage>
</organism>
<gene>
    <name evidence="1" type="primary">rimM</name>
    <name type="ordered locus">Anae109_1943</name>
</gene>
<accession>A7HBQ0</accession>
<protein>
    <recommendedName>
        <fullName evidence="1">Ribosome maturation factor RimM</fullName>
    </recommendedName>
</protein>
<name>RIMM_ANADF</name>
<dbReference type="EMBL" id="CP000769">
    <property type="protein sequence ID" value="ABS26146.1"/>
    <property type="molecule type" value="Genomic_DNA"/>
</dbReference>
<dbReference type="RefSeq" id="WP_012096724.1">
    <property type="nucleotide sequence ID" value="NC_009675.1"/>
</dbReference>
<dbReference type="SMR" id="A7HBQ0"/>
<dbReference type="STRING" id="404589.Anae109_1943"/>
<dbReference type="KEGG" id="afw:Anae109_1943"/>
<dbReference type="eggNOG" id="COG0806">
    <property type="taxonomic scope" value="Bacteria"/>
</dbReference>
<dbReference type="HOGENOM" id="CLU_077636_1_0_7"/>
<dbReference type="OrthoDB" id="5381335at2"/>
<dbReference type="Proteomes" id="UP000006382">
    <property type="component" value="Chromosome"/>
</dbReference>
<dbReference type="GO" id="GO:0005737">
    <property type="term" value="C:cytoplasm"/>
    <property type="evidence" value="ECO:0007669"/>
    <property type="project" value="UniProtKB-SubCell"/>
</dbReference>
<dbReference type="GO" id="GO:0005840">
    <property type="term" value="C:ribosome"/>
    <property type="evidence" value="ECO:0007669"/>
    <property type="project" value="InterPro"/>
</dbReference>
<dbReference type="GO" id="GO:0043022">
    <property type="term" value="F:ribosome binding"/>
    <property type="evidence" value="ECO:0007669"/>
    <property type="project" value="InterPro"/>
</dbReference>
<dbReference type="GO" id="GO:0042274">
    <property type="term" value="P:ribosomal small subunit biogenesis"/>
    <property type="evidence" value="ECO:0007669"/>
    <property type="project" value="UniProtKB-UniRule"/>
</dbReference>
<dbReference type="GO" id="GO:0006364">
    <property type="term" value="P:rRNA processing"/>
    <property type="evidence" value="ECO:0007669"/>
    <property type="project" value="UniProtKB-UniRule"/>
</dbReference>
<dbReference type="Gene3D" id="2.30.30.240">
    <property type="entry name" value="PRC-barrel domain"/>
    <property type="match status" value="1"/>
</dbReference>
<dbReference type="Gene3D" id="2.40.30.60">
    <property type="entry name" value="RimM"/>
    <property type="match status" value="1"/>
</dbReference>
<dbReference type="HAMAP" id="MF_00014">
    <property type="entry name" value="Ribosome_mat_RimM"/>
    <property type="match status" value="1"/>
</dbReference>
<dbReference type="InterPro" id="IPR011033">
    <property type="entry name" value="PRC_barrel-like_sf"/>
</dbReference>
<dbReference type="InterPro" id="IPR056792">
    <property type="entry name" value="PRC_RimM"/>
</dbReference>
<dbReference type="InterPro" id="IPR011961">
    <property type="entry name" value="RimM"/>
</dbReference>
<dbReference type="InterPro" id="IPR002676">
    <property type="entry name" value="RimM_N"/>
</dbReference>
<dbReference type="InterPro" id="IPR036976">
    <property type="entry name" value="RimM_N_sf"/>
</dbReference>
<dbReference type="NCBIfam" id="TIGR02273">
    <property type="entry name" value="16S_RimM"/>
    <property type="match status" value="1"/>
</dbReference>
<dbReference type="PANTHER" id="PTHR33692">
    <property type="entry name" value="RIBOSOME MATURATION FACTOR RIMM"/>
    <property type="match status" value="1"/>
</dbReference>
<dbReference type="PANTHER" id="PTHR33692:SF1">
    <property type="entry name" value="RIBOSOME MATURATION FACTOR RIMM"/>
    <property type="match status" value="1"/>
</dbReference>
<dbReference type="Pfam" id="PF24986">
    <property type="entry name" value="PRC_RimM"/>
    <property type="match status" value="1"/>
</dbReference>
<dbReference type="Pfam" id="PF01782">
    <property type="entry name" value="RimM"/>
    <property type="match status" value="1"/>
</dbReference>
<dbReference type="SUPFAM" id="SSF50346">
    <property type="entry name" value="PRC-barrel domain"/>
    <property type="match status" value="1"/>
</dbReference>
<comment type="function">
    <text evidence="1">An accessory protein needed during the final step in the assembly of 30S ribosomal subunit, possibly for assembly of the head region. Essential for efficient processing of 16S rRNA. May be needed both before and after RbfA during the maturation of 16S rRNA. It has affinity for free ribosomal 30S subunits but not for 70S ribosomes.</text>
</comment>
<comment type="subunit">
    <text evidence="1">Binds ribosomal protein uS19.</text>
</comment>
<comment type="subcellular location">
    <subcellularLocation>
        <location evidence="1">Cytoplasm</location>
    </subcellularLocation>
</comment>
<comment type="domain">
    <text evidence="1">The PRC barrel domain binds ribosomal protein uS19.</text>
</comment>
<comment type="similarity">
    <text evidence="1">Belongs to the RimM family.</text>
</comment>